<sequence length="505" mass="55179">MQRIIGTEVEYGISSPSDPTANPILTSTQAVLAYAAAAGIQRAKRTRWDYEVESPLRDARGFDLSRSAGPPPVVDADEVGAANMILTNGARLYVDHAHPEYSAPECTDPLDAVIWDKAGERVMEAAARHVASVPGAAKLQLYKNNVDGKGASYGSHENYLMSRQTPFSAIITGLTPFLVSRQVVTGSGRVGIGPSGDEPGFQLSQRSDYIEVEVGLETTLKRGIINTRDEPHADADRYRRLHVIIGDANLAETSTYLKLGTTALVLDLIEEGPAHAIDLTDLALARPVHAVHAISRDPSLRATVALADGRELTGLALQRIYLDRVAKLVDSRDPDPRAADIVETWAHVLDQLERDPMDCAELLDWPAKLRLLDGFRQRENLSWSAPRLHLVDLQYSDVRLDKGLYNRLVARGSMKRLVTEHQVLSAVENPPTDTRAYFRGECLRRFGADIAAASWDSVIFDLGGDSLVRIPTLEPLRGSKAHVGALLDSVDSAVELVEQLTAEPR</sequence>
<organism>
    <name type="scientific">Mycobacterium tuberculosis (strain CDC 1551 / Oshkosh)</name>
    <dbReference type="NCBI Taxonomy" id="83331"/>
    <lineage>
        <taxon>Bacteria</taxon>
        <taxon>Bacillati</taxon>
        <taxon>Actinomycetota</taxon>
        <taxon>Actinomycetes</taxon>
        <taxon>Mycobacteriales</taxon>
        <taxon>Mycobacteriaceae</taxon>
        <taxon>Mycobacterium</taxon>
        <taxon>Mycobacterium tuberculosis complex</taxon>
    </lineage>
</organism>
<dbReference type="EC" id="3.4.-.-"/>
<dbReference type="EC" id="3.5.1.119" evidence="2"/>
<dbReference type="EMBL" id="AE000516">
    <property type="protein sequence ID" value="AAK46455.1"/>
    <property type="molecule type" value="Genomic_DNA"/>
</dbReference>
<dbReference type="PIR" id="C70512">
    <property type="entry name" value="C70512"/>
</dbReference>
<dbReference type="RefSeq" id="WP_003411029.1">
    <property type="nucleotide sequence ID" value="NZ_KK341227.1"/>
</dbReference>
<dbReference type="SMR" id="P9WNU8"/>
<dbReference type="KEGG" id="mtc:MT2172"/>
<dbReference type="HOGENOM" id="CLU_040524_1_0_11"/>
<dbReference type="UniPathway" id="UPA00997"/>
<dbReference type="Proteomes" id="UP000001020">
    <property type="component" value="Chromosome"/>
</dbReference>
<dbReference type="GO" id="GO:0005524">
    <property type="term" value="F:ATP binding"/>
    <property type="evidence" value="ECO:0007669"/>
    <property type="project" value="UniProtKB-KW"/>
</dbReference>
<dbReference type="GO" id="GO:0016811">
    <property type="term" value="F:hydrolase activity, acting on carbon-nitrogen (but not peptide) bonds, in linear amides"/>
    <property type="evidence" value="ECO:0007669"/>
    <property type="project" value="InterPro"/>
</dbReference>
<dbReference type="GO" id="GO:0046872">
    <property type="term" value="F:metal ion binding"/>
    <property type="evidence" value="ECO:0007669"/>
    <property type="project" value="UniProtKB-KW"/>
</dbReference>
<dbReference type="GO" id="GO:0008233">
    <property type="term" value="F:peptidase activity"/>
    <property type="evidence" value="ECO:0007669"/>
    <property type="project" value="InterPro"/>
</dbReference>
<dbReference type="GO" id="GO:0019941">
    <property type="term" value="P:modification-dependent protein catabolic process"/>
    <property type="evidence" value="ECO:0007669"/>
    <property type="project" value="InterPro"/>
</dbReference>
<dbReference type="GO" id="GO:0010498">
    <property type="term" value="P:proteasomal protein catabolic process"/>
    <property type="evidence" value="ECO:0007669"/>
    <property type="project" value="InterPro"/>
</dbReference>
<dbReference type="GO" id="GO:0070490">
    <property type="term" value="P:protein pupylation"/>
    <property type="evidence" value="ECO:0007669"/>
    <property type="project" value="TreeGrafter"/>
</dbReference>
<dbReference type="InterPro" id="IPR022366">
    <property type="entry name" value="Pup_deamidase"/>
</dbReference>
<dbReference type="InterPro" id="IPR004347">
    <property type="entry name" value="Pup_ligase/deamidase"/>
</dbReference>
<dbReference type="NCBIfam" id="TIGR03688">
    <property type="entry name" value="depupylase_Dop"/>
    <property type="match status" value="1"/>
</dbReference>
<dbReference type="PANTHER" id="PTHR42307">
    <property type="entry name" value="PUP DEAMIDASE/DEPUPYLASE"/>
    <property type="match status" value="1"/>
</dbReference>
<dbReference type="PANTHER" id="PTHR42307:SF2">
    <property type="entry name" value="PUP DEAMIDASE_DEPUPYLASE"/>
    <property type="match status" value="1"/>
</dbReference>
<dbReference type="Pfam" id="PF03136">
    <property type="entry name" value="Pup_ligase"/>
    <property type="match status" value="1"/>
</dbReference>
<dbReference type="PIRSF" id="PIRSF018077">
    <property type="entry name" value="UCP018077"/>
    <property type="match status" value="1"/>
</dbReference>
<evidence type="ECO:0000250" key="1"/>
<evidence type="ECO:0000250" key="2">
    <source>
        <dbReference type="UniProtKB" id="P9WNU9"/>
    </source>
</evidence>
<evidence type="ECO:0000305" key="3"/>
<reference key="1">
    <citation type="journal article" date="2002" name="J. Bacteriol.">
        <title>Whole-genome comparison of Mycobacterium tuberculosis clinical and laboratory strains.</title>
        <authorList>
            <person name="Fleischmann R.D."/>
            <person name="Alland D."/>
            <person name="Eisen J.A."/>
            <person name="Carpenter L."/>
            <person name="White O."/>
            <person name="Peterson J.D."/>
            <person name="DeBoy R.T."/>
            <person name="Dodson R.J."/>
            <person name="Gwinn M.L."/>
            <person name="Haft D.H."/>
            <person name="Hickey E.K."/>
            <person name="Kolonay J.F."/>
            <person name="Nelson W.C."/>
            <person name="Umayam L.A."/>
            <person name="Ermolaeva M.D."/>
            <person name="Salzberg S.L."/>
            <person name="Delcher A."/>
            <person name="Utterback T.R."/>
            <person name="Weidman J.F."/>
            <person name="Khouri H.M."/>
            <person name="Gill J."/>
            <person name="Mikula A."/>
            <person name="Bishai W."/>
            <person name="Jacobs W.R. Jr."/>
            <person name="Venter J.C."/>
            <person name="Fraser C.M."/>
        </authorList>
    </citation>
    <scope>NUCLEOTIDE SEQUENCE [LARGE SCALE GENOMIC DNA]</scope>
    <source>
        <strain>CDC 1551 / Oshkosh</strain>
    </source>
</reference>
<keyword id="KW-0067">ATP-binding</keyword>
<keyword id="KW-0378">Hydrolase</keyword>
<keyword id="KW-0460">Magnesium</keyword>
<keyword id="KW-0479">Metal-binding</keyword>
<keyword id="KW-0547">Nucleotide-binding</keyword>
<keyword id="KW-1185">Reference proteome</keyword>
<keyword id="KW-0843">Virulence</keyword>
<proteinExistence type="inferred from homology"/>
<gene>
    <name type="primary">dop</name>
    <name type="synonym">pafD</name>
    <name type="ordered locus">MT2172</name>
</gene>
<protein>
    <recommendedName>
        <fullName>Pup deamidase/depupylase</fullName>
        <ecNumber>3.4.-.-</ecNumber>
        <ecNumber evidence="2">3.5.1.119</ecNumber>
    </recommendedName>
    <alternativeName>
        <fullName>Deamidase of protein Pup</fullName>
    </alternativeName>
</protein>
<comment type="function">
    <text evidence="2">Specifically catalyzes the deamidation of the C-terminal glutamine of the prokaryotic ubiquitin-like protein Pup to glutamate, thereby rendering Pup competent for conjugation. Also displays depupylase (DPUP) activity, removing conjugated Pup from target proteins; is thus involved in the recycling of Pup and may function similarly to deubiquitinases (DUBs) in eukaryotes to prevent or promote proteasomal degradation of certain proteins.</text>
</comment>
<comment type="catalytic activity">
    <reaction evidence="2">
        <text>[prokaryotic ubiquitin-like protein]-C-terminal-L-glutamine + H2O = [prokaryotic ubiquitin-like protein]-C-terminal-L-glutamate + NH4(+)</text>
        <dbReference type="Rhea" id="RHEA:47952"/>
        <dbReference type="Rhea" id="RHEA-COMP:11959"/>
        <dbReference type="Rhea" id="RHEA-COMP:11960"/>
        <dbReference type="ChEBI" id="CHEBI:15377"/>
        <dbReference type="ChEBI" id="CHEBI:28938"/>
        <dbReference type="ChEBI" id="CHEBI:78525"/>
        <dbReference type="ChEBI" id="CHEBI:88115"/>
        <dbReference type="EC" id="3.5.1.119"/>
    </reaction>
</comment>
<comment type="cofactor">
    <cofactor evidence="1">
        <name>ATP</name>
        <dbReference type="ChEBI" id="CHEBI:30616"/>
    </cofactor>
    <text evidence="1">ATP is required for the deamidation and depupylation reactions but is not hydrolyzed during the reactions.</text>
</comment>
<comment type="pathway">
    <text>Protein degradation; proteasomal Pup-dependent pathway.</text>
</comment>
<comment type="subunit">
    <text evidence="1">Interacts with the prokaryotic ubiquitin-like protein Pup.</text>
</comment>
<comment type="similarity">
    <text evidence="3">Belongs to the Pup ligase/Pup deamidase family. Pup deamidase subfamily.</text>
</comment>
<feature type="chain" id="PRO_0000427064" description="Pup deamidase/depupylase">
    <location>
        <begin position="1"/>
        <end position="505"/>
    </location>
</feature>
<feature type="active site" description="Proton acceptor" evidence="1">
    <location>
        <position position="95"/>
    </location>
</feature>
<feature type="binding site" evidence="1">
    <location>
        <begin position="6"/>
        <end position="10"/>
    </location>
    <ligand>
        <name>ATP</name>
        <dbReference type="ChEBI" id="CHEBI:30616"/>
    </ligand>
</feature>
<feature type="binding site" evidence="1">
    <location>
        <position position="8"/>
    </location>
    <ligand>
        <name>Mg(2+)</name>
        <dbReference type="ChEBI" id="CHEBI:18420"/>
        <label>1</label>
    </ligand>
</feature>
<feature type="binding site" evidence="1">
    <location>
        <position position="8"/>
    </location>
    <ligand>
        <name>Mg(2+)</name>
        <dbReference type="ChEBI" id="CHEBI:18420"/>
        <label>2</label>
    </ligand>
</feature>
<feature type="binding site" evidence="1">
    <location>
        <position position="93"/>
    </location>
    <ligand>
        <name>Mg(2+)</name>
        <dbReference type="ChEBI" id="CHEBI:18420"/>
        <label>1</label>
    </ligand>
</feature>
<feature type="binding site" evidence="1">
    <location>
        <position position="100"/>
    </location>
    <ligand>
        <name>Mg(2+)</name>
        <dbReference type="ChEBI" id="CHEBI:18420"/>
        <label>1</label>
    </ligand>
</feature>
<feature type="binding site" evidence="1">
    <location>
        <begin position="102"/>
        <end position="103"/>
    </location>
    <ligand>
        <name>ATP</name>
        <dbReference type="ChEBI" id="CHEBI:30616"/>
    </ligand>
</feature>
<feature type="binding site" evidence="1">
    <location>
        <position position="156"/>
    </location>
    <ligand>
        <name>Mg(2+)</name>
        <dbReference type="ChEBI" id="CHEBI:18420"/>
        <label>2</label>
    </ligand>
</feature>
<feature type="binding site" evidence="1">
    <location>
        <position position="158"/>
    </location>
    <ligand>
        <name>ATP</name>
        <dbReference type="ChEBI" id="CHEBI:30616"/>
    </ligand>
</feature>
<feature type="binding site" evidence="1">
    <location>
        <position position="240"/>
    </location>
    <ligand>
        <name>ATP</name>
        <dbReference type="ChEBI" id="CHEBI:30616"/>
    </ligand>
</feature>
<feature type="binding site" evidence="1">
    <location>
        <position position="242"/>
    </location>
    <ligand>
        <name>Mg(2+)</name>
        <dbReference type="ChEBI" id="CHEBI:18420"/>
        <label>2</label>
    </ligand>
</feature>
<name>DOP_MYCTO</name>
<accession>P9WNU8</accession>
<accession>L0TBE2</accession>
<accession>O33247</accession>
<accession>Q8VJQ0</accession>